<proteinExistence type="inferred from homology"/>
<protein>
    <recommendedName>
        <fullName evidence="1">Chaperone protein DnaK</fullName>
    </recommendedName>
    <alternativeName>
        <fullName evidence="1">HSP70</fullName>
    </alternativeName>
    <alternativeName>
        <fullName evidence="1">Heat shock 70 kDa protein</fullName>
    </alternativeName>
    <alternativeName>
        <fullName evidence="1">Heat shock protein 70</fullName>
    </alternativeName>
</protein>
<dbReference type="EMBL" id="AP008971">
    <property type="protein sequence ID" value="BAG08198.1"/>
    <property type="molecule type" value="Genomic_DNA"/>
</dbReference>
<dbReference type="RefSeq" id="WP_012290623.1">
    <property type="nucleotide sequence ID" value="NC_010376.1"/>
</dbReference>
<dbReference type="SMR" id="B0S1F8"/>
<dbReference type="STRING" id="334413.FMG_0780"/>
<dbReference type="KEGG" id="fma:FMG_0780"/>
<dbReference type="eggNOG" id="COG0443">
    <property type="taxonomic scope" value="Bacteria"/>
</dbReference>
<dbReference type="HOGENOM" id="CLU_005965_2_4_9"/>
<dbReference type="Proteomes" id="UP000001319">
    <property type="component" value="Chromosome"/>
</dbReference>
<dbReference type="GO" id="GO:0005524">
    <property type="term" value="F:ATP binding"/>
    <property type="evidence" value="ECO:0007669"/>
    <property type="project" value="UniProtKB-UniRule"/>
</dbReference>
<dbReference type="GO" id="GO:0140662">
    <property type="term" value="F:ATP-dependent protein folding chaperone"/>
    <property type="evidence" value="ECO:0007669"/>
    <property type="project" value="InterPro"/>
</dbReference>
<dbReference type="GO" id="GO:0051082">
    <property type="term" value="F:unfolded protein binding"/>
    <property type="evidence" value="ECO:0007669"/>
    <property type="project" value="InterPro"/>
</dbReference>
<dbReference type="CDD" id="cd10234">
    <property type="entry name" value="ASKHA_NBD_HSP70_DnaK-like"/>
    <property type="match status" value="1"/>
</dbReference>
<dbReference type="FunFam" id="2.60.34.10:FF:000014">
    <property type="entry name" value="Chaperone protein DnaK HSP70"/>
    <property type="match status" value="1"/>
</dbReference>
<dbReference type="FunFam" id="1.20.1270.10:FF:000001">
    <property type="entry name" value="Molecular chaperone DnaK"/>
    <property type="match status" value="1"/>
</dbReference>
<dbReference type="FunFam" id="3.30.420.40:FF:000071">
    <property type="entry name" value="Molecular chaperone DnaK"/>
    <property type="match status" value="1"/>
</dbReference>
<dbReference type="FunFam" id="3.90.640.10:FF:000003">
    <property type="entry name" value="Molecular chaperone DnaK"/>
    <property type="match status" value="1"/>
</dbReference>
<dbReference type="Gene3D" id="1.20.1270.10">
    <property type="match status" value="1"/>
</dbReference>
<dbReference type="Gene3D" id="3.30.420.40">
    <property type="match status" value="2"/>
</dbReference>
<dbReference type="Gene3D" id="3.90.640.10">
    <property type="entry name" value="Actin, Chain A, domain 4"/>
    <property type="match status" value="1"/>
</dbReference>
<dbReference type="Gene3D" id="2.60.34.10">
    <property type="entry name" value="Substrate Binding Domain Of DNAk, Chain A, domain 1"/>
    <property type="match status" value="1"/>
</dbReference>
<dbReference type="HAMAP" id="MF_00332">
    <property type="entry name" value="DnaK"/>
    <property type="match status" value="1"/>
</dbReference>
<dbReference type="InterPro" id="IPR043129">
    <property type="entry name" value="ATPase_NBD"/>
</dbReference>
<dbReference type="InterPro" id="IPR012725">
    <property type="entry name" value="Chaperone_DnaK"/>
</dbReference>
<dbReference type="InterPro" id="IPR018181">
    <property type="entry name" value="Heat_shock_70_CS"/>
</dbReference>
<dbReference type="InterPro" id="IPR029048">
    <property type="entry name" value="HSP70_C_sf"/>
</dbReference>
<dbReference type="InterPro" id="IPR029047">
    <property type="entry name" value="HSP70_peptide-bd_sf"/>
</dbReference>
<dbReference type="InterPro" id="IPR013126">
    <property type="entry name" value="Hsp_70_fam"/>
</dbReference>
<dbReference type="NCBIfam" id="NF001413">
    <property type="entry name" value="PRK00290.1"/>
    <property type="match status" value="1"/>
</dbReference>
<dbReference type="NCBIfam" id="TIGR02350">
    <property type="entry name" value="prok_dnaK"/>
    <property type="match status" value="1"/>
</dbReference>
<dbReference type="PANTHER" id="PTHR19375">
    <property type="entry name" value="HEAT SHOCK PROTEIN 70KDA"/>
    <property type="match status" value="1"/>
</dbReference>
<dbReference type="Pfam" id="PF00012">
    <property type="entry name" value="HSP70"/>
    <property type="match status" value="1"/>
</dbReference>
<dbReference type="PRINTS" id="PR00301">
    <property type="entry name" value="HEATSHOCK70"/>
</dbReference>
<dbReference type="SUPFAM" id="SSF53067">
    <property type="entry name" value="Actin-like ATPase domain"/>
    <property type="match status" value="2"/>
</dbReference>
<dbReference type="SUPFAM" id="SSF100934">
    <property type="entry name" value="Heat shock protein 70kD (HSP70), C-terminal subdomain"/>
    <property type="match status" value="1"/>
</dbReference>
<dbReference type="SUPFAM" id="SSF100920">
    <property type="entry name" value="Heat shock protein 70kD (HSP70), peptide-binding domain"/>
    <property type="match status" value="1"/>
</dbReference>
<dbReference type="PROSITE" id="PS00297">
    <property type="entry name" value="HSP70_1"/>
    <property type="match status" value="1"/>
</dbReference>
<dbReference type="PROSITE" id="PS00329">
    <property type="entry name" value="HSP70_2"/>
    <property type="match status" value="1"/>
</dbReference>
<dbReference type="PROSITE" id="PS01036">
    <property type="entry name" value="HSP70_3"/>
    <property type="match status" value="1"/>
</dbReference>
<evidence type="ECO:0000255" key="1">
    <source>
        <dbReference type="HAMAP-Rule" id="MF_00332"/>
    </source>
</evidence>
<keyword id="KW-0067">ATP-binding</keyword>
<keyword id="KW-0143">Chaperone</keyword>
<keyword id="KW-0547">Nucleotide-binding</keyword>
<keyword id="KW-0597">Phosphoprotein</keyword>
<keyword id="KW-1185">Reference proteome</keyword>
<keyword id="KW-0346">Stress response</keyword>
<sequence length="608" mass="66002">MSKVIGIDLGTTNSAVAVMEGGESVIVPNSEGNRTTPSIVAFTKDGERLVGETAKRQAITNPDRTITSIKREMGTEYKVNIDGKDYTPEEISAMILQKLKADTESYLGEEVTEAVITVPAYFTDSQRQATKNAGKIAGLNVKRIINEPTAAALAYGIDKETDQHKVMVYDLGGGTFDVSILEVGDGVFEVLATRGNNRLGGDDFDEKLLNYLADEFMKQNGVDLRKDPTSKQRLKDAAENAKKELSTRVSTNVNLPFISAVNGTPVHLNMDITRSKFDELTSDLVEESLKPVRQALEDAGLSHNDIEKVLLVGGSTRIPAVQEAVKKLIGKNPQKDINPDECVAIGAALQGGVLTGEVKDLLLLDVTPLSLGIETLGGVCTKLIERNTTIPTKKSQVFTTAADGQTSVEIKVLQGEREMAADNTLLGQFNLTEIPAAPRGVPQIEVTFDIDANGIVNVSAKDLGSGKQQAMTITSSTKMSDDEIKRKVDEASKYAEEDKNKKETIETKNSAESVIYQVEKTIKDLGDKVSETEKSDINSKIEALKSILDSGDNKDIKAKTDELTQEMYKLSSKLYENNAQQPGASQEAKKDDDVVDADYEVVDDDENK</sequence>
<gene>
    <name evidence="1" type="primary">dnaK</name>
    <name type="ordered locus">FMG_0780</name>
</gene>
<feature type="chain" id="PRO_1000119706" description="Chaperone protein DnaK">
    <location>
        <begin position="1"/>
        <end position="608"/>
    </location>
</feature>
<feature type="modified residue" description="Phosphothreonine; by autocatalysis" evidence="1">
    <location>
        <position position="175"/>
    </location>
</feature>
<accession>B0S1F8</accession>
<comment type="function">
    <text evidence="1">Acts as a chaperone.</text>
</comment>
<comment type="induction">
    <text evidence="1">By stress conditions e.g. heat shock.</text>
</comment>
<comment type="similarity">
    <text evidence="1">Belongs to the heat shock protein 70 family.</text>
</comment>
<organism>
    <name type="scientific">Finegoldia magna (strain ATCC 29328 / DSM 20472 / WAL 2508)</name>
    <name type="common">Peptostreptococcus magnus</name>
    <dbReference type="NCBI Taxonomy" id="334413"/>
    <lineage>
        <taxon>Bacteria</taxon>
        <taxon>Bacillati</taxon>
        <taxon>Bacillota</taxon>
        <taxon>Tissierellia</taxon>
        <taxon>Tissierellales</taxon>
        <taxon>Peptoniphilaceae</taxon>
        <taxon>Finegoldia</taxon>
    </lineage>
</organism>
<name>DNAK_FINM2</name>
<reference key="1">
    <citation type="journal article" date="2008" name="DNA Res.">
        <title>Complete genome sequence of Finegoldia magna, an anaerobic opportunistic pathogen.</title>
        <authorList>
            <person name="Goto T."/>
            <person name="Yamashita A."/>
            <person name="Hirakawa H."/>
            <person name="Matsutani M."/>
            <person name="Todo K."/>
            <person name="Ohshima K."/>
            <person name="Toh H."/>
            <person name="Miyamoto K."/>
            <person name="Kuhara S."/>
            <person name="Hattori M."/>
            <person name="Shimizu T."/>
            <person name="Akimoto S."/>
        </authorList>
    </citation>
    <scope>NUCLEOTIDE SEQUENCE [LARGE SCALE GENOMIC DNA]</scope>
    <source>
        <strain>ATCC 29328 / DSM 20472 / WAL 2508</strain>
    </source>
</reference>